<comment type="function">
    <text evidence="1">Specifically methylates guanosine-37 in various tRNAs.</text>
</comment>
<comment type="catalytic activity">
    <reaction evidence="1">
        <text>guanosine(37) in tRNA + S-adenosyl-L-methionine = N(1)-methylguanosine(37) in tRNA + S-adenosyl-L-homocysteine + H(+)</text>
        <dbReference type="Rhea" id="RHEA:36899"/>
        <dbReference type="Rhea" id="RHEA-COMP:10145"/>
        <dbReference type="Rhea" id="RHEA-COMP:10147"/>
        <dbReference type="ChEBI" id="CHEBI:15378"/>
        <dbReference type="ChEBI" id="CHEBI:57856"/>
        <dbReference type="ChEBI" id="CHEBI:59789"/>
        <dbReference type="ChEBI" id="CHEBI:73542"/>
        <dbReference type="ChEBI" id="CHEBI:74269"/>
        <dbReference type="EC" id="2.1.1.228"/>
    </reaction>
</comment>
<comment type="subunit">
    <text evidence="1">Homodimer.</text>
</comment>
<comment type="subcellular location">
    <subcellularLocation>
        <location evidence="1">Cytoplasm</location>
    </subcellularLocation>
</comment>
<comment type="similarity">
    <text evidence="1">Belongs to the RNA methyltransferase TrmD family.</text>
</comment>
<dbReference type="EC" id="2.1.1.228" evidence="1"/>
<dbReference type="EMBL" id="CP000560">
    <property type="protein sequence ID" value="ABS73949.1"/>
    <property type="molecule type" value="Genomic_DNA"/>
</dbReference>
<dbReference type="RefSeq" id="WP_012117547.1">
    <property type="nucleotide sequence ID" value="NC_009725.2"/>
</dbReference>
<dbReference type="SMR" id="A7Z4M3"/>
<dbReference type="GeneID" id="93080719"/>
<dbReference type="KEGG" id="bay:RBAM_015860"/>
<dbReference type="HOGENOM" id="CLU_047363_0_1_9"/>
<dbReference type="Proteomes" id="UP000001120">
    <property type="component" value="Chromosome"/>
</dbReference>
<dbReference type="GO" id="GO:0005829">
    <property type="term" value="C:cytosol"/>
    <property type="evidence" value="ECO:0007669"/>
    <property type="project" value="TreeGrafter"/>
</dbReference>
<dbReference type="GO" id="GO:0052906">
    <property type="term" value="F:tRNA (guanine(37)-N1)-methyltransferase activity"/>
    <property type="evidence" value="ECO:0007669"/>
    <property type="project" value="UniProtKB-UniRule"/>
</dbReference>
<dbReference type="GO" id="GO:0002939">
    <property type="term" value="P:tRNA N1-guanine methylation"/>
    <property type="evidence" value="ECO:0007669"/>
    <property type="project" value="TreeGrafter"/>
</dbReference>
<dbReference type="CDD" id="cd18080">
    <property type="entry name" value="TrmD-like"/>
    <property type="match status" value="1"/>
</dbReference>
<dbReference type="FunFam" id="1.10.1270.20:FF:000001">
    <property type="entry name" value="tRNA (guanine-N(1)-)-methyltransferase"/>
    <property type="match status" value="1"/>
</dbReference>
<dbReference type="FunFam" id="3.40.1280.10:FF:000001">
    <property type="entry name" value="tRNA (guanine-N(1)-)-methyltransferase"/>
    <property type="match status" value="1"/>
</dbReference>
<dbReference type="Gene3D" id="3.40.1280.10">
    <property type="match status" value="1"/>
</dbReference>
<dbReference type="Gene3D" id="1.10.1270.20">
    <property type="entry name" value="tRNA(m1g37)methyltransferase, domain 2"/>
    <property type="match status" value="1"/>
</dbReference>
<dbReference type="HAMAP" id="MF_00605">
    <property type="entry name" value="TrmD"/>
    <property type="match status" value="1"/>
</dbReference>
<dbReference type="InterPro" id="IPR029028">
    <property type="entry name" value="Alpha/beta_knot_MTases"/>
</dbReference>
<dbReference type="InterPro" id="IPR023148">
    <property type="entry name" value="tRNA_m1G_MeTrfase_C_sf"/>
</dbReference>
<dbReference type="InterPro" id="IPR002649">
    <property type="entry name" value="tRNA_m1G_MeTrfase_TrmD"/>
</dbReference>
<dbReference type="InterPro" id="IPR029026">
    <property type="entry name" value="tRNA_m1G_MTases_N"/>
</dbReference>
<dbReference type="InterPro" id="IPR016009">
    <property type="entry name" value="tRNA_MeTrfase_TRMD/TRM10"/>
</dbReference>
<dbReference type="NCBIfam" id="NF000648">
    <property type="entry name" value="PRK00026.1"/>
    <property type="match status" value="1"/>
</dbReference>
<dbReference type="NCBIfam" id="TIGR00088">
    <property type="entry name" value="trmD"/>
    <property type="match status" value="1"/>
</dbReference>
<dbReference type="PANTHER" id="PTHR46417">
    <property type="entry name" value="TRNA (GUANINE-N(1)-)-METHYLTRANSFERASE"/>
    <property type="match status" value="1"/>
</dbReference>
<dbReference type="PANTHER" id="PTHR46417:SF1">
    <property type="entry name" value="TRNA (GUANINE-N(1)-)-METHYLTRANSFERASE"/>
    <property type="match status" value="1"/>
</dbReference>
<dbReference type="Pfam" id="PF01746">
    <property type="entry name" value="tRNA_m1G_MT"/>
    <property type="match status" value="1"/>
</dbReference>
<dbReference type="PIRSF" id="PIRSF000386">
    <property type="entry name" value="tRNA_mtase"/>
    <property type="match status" value="1"/>
</dbReference>
<dbReference type="SUPFAM" id="SSF75217">
    <property type="entry name" value="alpha/beta knot"/>
    <property type="match status" value="1"/>
</dbReference>
<protein>
    <recommendedName>
        <fullName evidence="1">tRNA (guanine-N(1)-)-methyltransferase</fullName>
        <ecNumber evidence="1">2.1.1.228</ecNumber>
    </recommendedName>
    <alternativeName>
        <fullName evidence="1">M1G-methyltransferase</fullName>
    </alternativeName>
    <alternativeName>
        <fullName evidence="1">tRNA [GM37] methyltransferase</fullName>
    </alternativeName>
</protein>
<keyword id="KW-0963">Cytoplasm</keyword>
<keyword id="KW-0489">Methyltransferase</keyword>
<keyword id="KW-0949">S-adenosyl-L-methionine</keyword>
<keyword id="KW-0808">Transferase</keyword>
<keyword id="KW-0819">tRNA processing</keyword>
<reference key="1">
    <citation type="journal article" date="2007" name="Nat. Biotechnol.">
        <title>Comparative analysis of the complete genome sequence of the plant growth-promoting bacterium Bacillus amyloliquefaciens FZB42.</title>
        <authorList>
            <person name="Chen X.H."/>
            <person name="Koumoutsi A."/>
            <person name="Scholz R."/>
            <person name="Eisenreich A."/>
            <person name="Schneider K."/>
            <person name="Heinemeyer I."/>
            <person name="Morgenstern B."/>
            <person name="Voss B."/>
            <person name="Hess W.R."/>
            <person name="Reva O."/>
            <person name="Junge H."/>
            <person name="Voigt B."/>
            <person name="Jungblut P.R."/>
            <person name="Vater J."/>
            <person name="Suessmuth R."/>
            <person name="Liesegang H."/>
            <person name="Strittmatter A."/>
            <person name="Gottschalk G."/>
            <person name="Borriss R."/>
        </authorList>
    </citation>
    <scope>NUCLEOTIDE SEQUENCE [LARGE SCALE GENOMIC DNA]</scope>
    <source>
        <strain>DSM 23117 / BGSC 10A6 / LMG 26770 / FZB42</strain>
    </source>
</reference>
<gene>
    <name evidence="1" type="primary">trmD</name>
    <name type="ordered locus">RBAM_015860</name>
</gene>
<name>TRMD_BACVZ</name>
<accession>A7Z4M3</accession>
<evidence type="ECO:0000255" key="1">
    <source>
        <dbReference type="HAMAP-Rule" id="MF_00605"/>
    </source>
</evidence>
<sequence length="243" mass="27777">MKIDFLTLFPEMFQGVLGSSILQKAQEKEAVRFDVINFRAFSDNKHQTVDDYPYGGGAGMVLKPQPVFDAVEKLTAGTDAKPRIILVCPQGERYTQKKAEELAQEEHLMFICGHYEGYDERIREHLVTDEISIGDFVLTGGELPAMMIADSVVRLLPGVLGKEASHVEDSFSTGLLEHPHYTRPADYRGLKVPETLLSGNHAKIQKWRNKESIRRTFLRRPDLLKNYPLTDEQRKWISEWENE</sequence>
<proteinExistence type="inferred from homology"/>
<organism>
    <name type="scientific">Bacillus velezensis (strain DSM 23117 / BGSC 10A6 / LMG 26770 / FZB42)</name>
    <name type="common">Bacillus amyloliquefaciens subsp. plantarum</name>
    <dbReference type="NCBI Taxonomy" id="326423"/>
    <lineage>
        <taxon>Bacteria</taxon>
        <taxon>Bacillati</taxon>
        <taxon>Bacillota</taxon>
        <taxon>Bacilli</taxon>
        <taxon>Bacillales</taxon>
        <taxon>Bacillaceae</taxon>
        <taxon>Bacillus</taxon>
        <taxon>Bacillus amyloliquefaciens group</taxon>
    </lineage>
</organism>
<feature type="chain" id="PRO_1000006449" description="tRNA (guanine-N(1)-)-methyltransferase">
    <location>
        <begin position="1"/>
        <end position="243"/>
    </location>
</feature>
<feature type="binding site" evidence="1">
    <location>
        <position position="113"/>
    </location>
    <ligand>
        <name>S-adenosyl-L-methionine</name>
        <dbReference type="ChEBI" id="CHEBI:59789"/>
    </ligand>
</feature>
<feature type="binding site" evidence="1">
    <location>
        <begin position="133"/>
        <end position="138"/>
    </location>
    <ligand>
        <name>S-adenosyl-L-methionine</name>
        <dbReference type="ChEBI" id="CHEBI:59789"/>
    </ligand>
</feature>